<dbReference type="EMBL" id="X63099">
    <property type="protein sequence ID" value="CAA44813.1"/>
    <property type="molecule type" value="mRNA"/>
</dbReference>
<dbReference type="EMBL" id="AK083716">
    <property type="protein sequence ID" value="BAC39002.1"/>
    <property type="molecule type" value="mRNA"/>
</dbReference>
<dbReference type="EMBL" id="BC024387">
    <property type="protein sequence ID" value="AAH24387.1"/>
    <property type="molecule type" value="mRNA"/>
</dbReference>
<dbReference type="CCDS" id="CCDS18668.1"/>
<dbReference type="PIR" id="S23590">
    <property type="entry name" value="S23590"/>
</dbReference>
<dbReference type="RefSeq" id="NP_001153484.1">
    <property type="nucleotide sequence ID" value="NM_001160012.2"/>
</dbReference>
<dbReference type="RefSeq" id="NP_032152.1">
    <property type="nucleotide sequence ID" value="NM_008126.3"/>
</dbReference>
<dbReference type="SMR" id="P28231"/>
<dbReference type="BioGRID" id="199933">
    <property type="interactions" value="4"/>
</dbReference>
<dbReference type="FunCoup" id="P28231">
    <property type="interactions" value="50"/>
</dbReference>
<dbReference type="IntAct" id="P28231">
    <property type="interactions" value="2"/>
</dbReference>
<dbReference type="STRING" id="10090.ENSMUSP00000046755"/>
<dbReference type="iPTMnet" id="P28231"/>
<dbReference type="PhosphoSitePlus" id="P28231"/>
<dbReference type="PaxDb" id="10090-ENSMUSP00000046755"/>
<dbReference type="PeptideAtlas" id="P28231"/>
<dbReference type="ProteomicsDB" id="283985"/>
<dbReference type="Antibodypedia" id="31497">
    <property type="antibodies" value="303 antibodies from 30 providers"/>
</dbReference>
<dbReference type="DNASU" id="14620"/>
<dbReference type="Ensembl" id="ENSMUST00000046532.4">
    <property type="protein sequence ID" value="ENSMUSP00000046755.4"/>
    <property type="gene ID" value="ENSMUSG00000042367.13"/>
</dbReference>
<dbReference type="Ensembl" id="ENSMUST00000106091.9">
    <property type="protein sequence ID" value="ENSMUSP00000101697.3"/>
    <property type="gene ID" value="ENSMUSG00000042367.13"/>
</dbReference>
<dbReference type="GeneID" id="14620"/>
<dbReference type="KEGG" id="mmu:14620"/>
<dbReference type="UCSC" id="uc008uus.2">
    <property type="organism name" value="mouse"/>
</dbReference>
<dbReference type="AGR" id="MGI:95721"/>
<dbReference type="CTD" id="2707"/>
<dbReference type="MGI" id="MGI:95721">
    <property type="gene designation" value="Gjb3"/>
</dbReference>
<dbReference type="VEuPathDB" id="HostDB:ENSMUSG00000042367"/>
<dbReference type="eggNOG" id="ENOG502QRC0">
    <property type="taxonomic scope" value="Eukaryota"/>
</dbReference>
<dbReference type="GeneTree" id="ENSGT01030000234513"/>
<dbReference type="HOGENOM" id="CLU_037388_4_1_1"/>
<dbReference type="InParanoid" id="P28231"/>
<dbReference type="OMA" id="HFFPISN"/>
<dbReference type="OrthoDB" id="9441654at2759"/>
<dbReference type="PhylomeDB" id="P28231"/>
<dbReference type="TreeFam" id="TF329606"/>
<dbReference type="Reactome" id="R-MMU-190861">
    <property type="pathway name" value="Gap junction assembly"/>
</dbReference>
<dbReference type="BioGRID-ORCS" id="14620">
    <property type="hits" value="1 hit in 78 CRISPR screens"/>
</dbReference>
<dbReference type="ChiTaRS" id="Gjb3">
    <property type="organism name" value="mouse"/>
</dbReference>
<dbReference type="PRO" id="PR:P28231"/>
<dbReference type="Proteomes" id="UP000000589">
    <property type="component" value="Chromosome 4"/>
</dbReference>
<dbReference type="RNAct" id="P28231">
    <property type="molecule type" value="protein"/>
</dbReference>
<dbReference type="Bgee" id="ENSMUSG00000042367">
    <property type="expression patterns" value="Expressed in ectoplacental cone and 112 other cell types or tissues"/>
</dbReference>
<dbReference type="ExpressionAtlas" id="P28231">
    <property type="expression patterns" value="baseline and differential"/>
</dbReference>
<dbReference type="GO" id="GO:0005911">
    <property type="term" value="C:cell-cell junction"/>
    <property type="evidence" value="ECO:0000314"/>
    <property type="project" value="MGI"/>
</dbReference>
<dbReference type="GO" id="GO:0005922">
    <property type="term" value="C:connexin complex"/>
    <property type="evidence" value="ECO:0007669"/>
    <property type="project" value="InterPro"/>
</dbReference>
<dbReference type="GO" id="GO:0005737">
    <property type="term" value="C:cytoplasm"/>
    <property type="evidence" value="ECO:0000314"/>
    <property type="project" value="MGI"/>
</dbReference>
<dbReference type="GO" id="GO:0005921">
    <property type="term" value="C:gap junction"/>
    <property type="evidence" value="ECO:0000314"/>
    <property type="project" value="MGI"/>
</dbReference>
<dbReference type="GO" id="GO:0043231">
    <property type="term" value="C:intracellular membrane-bounded organelle"/>
    <property type="evidence" value="ECO:0007669"/>
    <property type="project" value="Ensembl"/>
</dbReference>
<dbReference type="GO" id="GO:0007154">
    <property type="term" value="P:cell communication"/>
    <property type="evidence" value="ECO:0007669"/>
    <property type="project" value="InterPro"/>
</dbReference>
<dbReference type="GO" id="GO:0001890">
    <property type="term" value="P:placenta development"/>
    <property type="evidence" value="ECO:0000315"/>
    <property type="project" value="MGI"/>
</dbReference>
<dbReference type="FunFam" id="1.20.1440.80:FF:000001">
    <property type="entry name" value="Gap junction alpha-1"/>
    <property type="match status" value="1"/>
</dbReference>
<dbReference type="Gene3D" id="1.20.1440.80">
    <property type="entry name" value="Gap junction channel protein cysteine-rich domain"/>
    <property type="match status" value="1"/>
</dbReference>
<dbReference type="InterPro" id="IPR000500">
    <property type="entry name" value="Connexin"/>
</dbReference>
<dbReference type="InterPro" id="IPR002269">
    <property type="entry name" value="Connexin31"/>
</dbReference>
<dbReference type="InterPro" id="IPR019570">
    <property type="entry name" value="Connexin_CCC"/>
</dbReference>
<dbReference type="InterPro" id="IPR017990">
    <property type="entry name" value="Connexin_CS"/>
</dbReference>
<dbReference type="InterPro" id="IPR013092">
    <property type="entry name" value="Connexin_N"/>
</dbReference>
<dbReference type="InterPro" id="IPR038359">
    <property type="entry name" value="Connexin_N_sf"/>
</dbReference>
<dbReference type="PANTHER" id="PTHR11984">
    <property type="entry name" value="CONNEXIN"/>
    <property type="match status" value="1"/>
</dbReference>
<dbReference type="PANTHER" id="PTHR11984:SF65">
    <property type="entry name" value="GAP JUNCTION BETA-3 PROTEIN"/>
    <property type="match status" value="1"/>
</dbReference>
<dbReference type="Pfam" id="PF00029">
    <property type="entry name" value="Connexin"/>
    <property type="match status" value="1"/>
</dbReference>
<dbReference type="PRINTS" id="PR00206">
    <property type="entry name" value="CONNEXIN"/>
</dbReference>
<dbReference type="PRINTS" id="PR01140">
    <property type="entry name" value="CONNEXINB3"/>
</dbReference>
<dbReference type="SMART" id="SM00037">
    <property type="entry name" value="CNX"/>
    <property type="match status" value="1"/>
</dbReference>
<dbReference type="SMART" id="SM01089">
    <property type="entry name" value="Connexin_CCC"/>
    <property type="match status" value="1"/>
</dbReference>
<dbReference type="PROSITE" id="PS00407">
    <property type="entry name" value="CONNEXINS_1"/>
    <property type="match status" value="1"/>
</dbReference>
<dbReference type="PROSITE" id="PS00408">
    <property type="entry name" value="CONNEXINS_2"/>
    <property type="match status" value="1"/>
</dbReference>
<feature type="chain" id="PRO_0000057863" description="Gap junction beta-3 protein">
    <location>
        <begin position="1"/>
        <end position="270"/>
    </location>
</feature>
<feature type="topological domain" description="Cytoplasmic" evidence="1">
    <location>
        <begin position="1"/>
        <end position="20"/>
    </location>
</feature>
<feature type="transmembrane region" description="Helical" evidence="1">
    <location>
        <begin position="21"/>
        <end position="40"/>
    </location>
</feature>
<feature type="topological domain" description="Extracellular" evidence="1">
    <location>
        <begin position="41"/>
        <end position="75"/>
    </location>
</feature>
<feature type="transmembrane region" description="Helical" evidence="1">
    <location>
        <begin position="76"/>
        <end position="98"/>
    </location>
</feature>
<feature type="topological domain" description="Cytoplasmic" evidence="1">
    <location>
        <begin position="99"/>
        <end position="126"/>
    </location>
</feature>
<feature type="transmembrane region" description="Helical" evidence="1">
    <location>
        <begin position="127"/>
        <end position="149"/>
    </location>
</feature>
<feature type="topological domain" description="Extracellular" evidence="1">
    <location>
        <begin position="150"/>
        <end position="188"/>
    </location>
</feature>
<feature type="transmembrane region" description="Helical" evidence="1">
    <location>
        <begin position="189"/>
        <end position="211"/>
    </location>
</feature>
<feature type="topological domain" description="Cytoplasmic" evidence="1">
    <location>
        <begin position="212"/>
        <end position="270"/>
    </location>
</feature>
<feature type="region of interest" description="Disordered" evidence="2">
    <location>
        <begin position="246"/>
        <end position="270"/>
    </location>
</feature>
<gene>
    <name type="primary">Gjb3</name>
    <name type="synonym">Cxn-31</name>
</gene>
<organism>
    <name type="scientific">Mus musculus</name>
    <name type="common">Mouse</name>
    <dbReference type="NCBI Taxonomy" id="10090"/>
    <lineage>
        <taxon>Eukaryota</taxon>
        <taxon>Metazoa</taxon>
        <taxon>Chordata</taxon>
        <taxon>Craniata</taxon>
        <taxon>Vertebrata</taxon>
        <taxon>Euteleostomi</taxon>
        <taxon>Mammalia</taxon>
        <taxon>Eutheria</taxon>
        <taxon>Euarchontoglires</taxon>
        <taxon>Glires</taxon>
        <taxon>Rodentia</taxon>
        <taxon>Myomorpha</taxon>
        <taxon>Muroidea</taxon>
        <taxon>Muridae</taxon>
        <taxon>Murinae</taxon>
        <taxon>Mus</taxon>
        <taxon>Mus</taxon>
    </lineage>
</organism>
<comment type="function">
    <text>One gap junction consists of a cluster of closely packed pairs of transmembrane channels, the connexons, through which materials of low MW diffuse from one cell to a neighboring cell.</text>
</comment>
<comment type="subunit">
    <text evidence="3">A connexon is composed of a hexamer of connexins. Interacts with CNST.</text>
</comment>
<comment type="interaction">
    <interactant intactId="EBI-1767245">
        <id>P28231</id>
    </interactant>
    <interactant intactId="EBI-298630">
        <id>P23242</id>
        <label>Gja1</label>
    </interactant>
    <organismsDiffer>false</organismsDiffer>
    <experiments>2</experiments>
</comment>
<comment type="subcellular location">
    <subcellularLocation>
        <location>Cell membrane</location>
        <topology>Multi-pass membrane protein</topology>
    </subcellularLocation>
    <subcellularLocation>
        <location>Cell junction</location>
        <location>Gap junction</location>
    </subcellularLocation>
</comment>
<comment type="similarity">
    <text evidence="4">Belongs to the connexin family. Beta-type (group I) subfamily.</text>
</comment>
<protein>
    <recommendedName>
        <fullName>Gap junction beta-3 protein</fullName>
    </recommendedName>
    <alternativeName>
        <fullName>Connexin-31</fullName>
        <shortName>Cx31</shortName>
    </alternativeName>
</protein>
<keyword id="KW-0965">Cell junction</keyword>
<keyword id="KW-1003">Cell membrane</keyword>
<keyword id="KW-0303">Gap junction</keyword>
<keyword id="KW-0472">Membrane</keyword>
<keyword id="KW-1185">Reference proteome</keyword>
<keyword id="KW-0812">Transmembrane</keyword>
<keyword id="KW-1133">Transmembrane helix</keyword>
<proteinExistence type="evidence at protein level"/>
<accession>P28231</accession>
<evidence type="ECO:0000255" key="1"/>
<evidence type="ECO:0000256" key="2">
    <source>
        <dbReference type="SAM" id="MobiDB-lite"/>
    </source>
</evidence>
<evidence type="ECO:0000269" key="3">
    <source>
    </source>
</evidence>
<evidence type="ECO:0000305" key="4"/>
<name>CXB3_MOUSE</name>
<reference key="1">
    <citation type="journal article" date="1992" name="Eur. J. Cell Biol.">
        <title>Characterization of gap junction genes expressed in F9 embryonic carcinoma cells: molecular cloning of mouse connexin31 and -45 cDNAs.</title>
        <authorList>
            <person name="Hennemann H."/>
            <person name="Schwarz H.J."/>
            <person name="Willecke K."/>
        </authorList>
    </citation>
    <scope>NUCLEOTIDE SEQUENCE [MRNA]</scope>
</reference>
<reference key="2">
    <citation type="journal article" date="2005" name="Science">
        <title>The transcriptional landscape of the mammalian genome.</title>
        <authorList>
            <person name="Carninci P."/>
            <person name="Kasukawa T."/>
            <person name="Katayama S."/>
            <person name="Gough J."/>
            <person name="Frith M.C."/>
            <person name="Maeda N."/>
            <person name="Oyama R."/>
            <person name="Ravasi T."/>
            <person name="Lenhard B."/>
            <person name="Wells C."/>
            <person name="Kodzius R."/>
            <person name="Shimokawa K."/>
            <person name="Bajic V.B."/>
            <person name="Brenner S.E."/>
            <person name="Batalov S."/>
            <person name="Forrest A.R."/>
            <person name="Zavolan M."/>
            <person name="Davis M.J."/>
            <person name="Wilming L.G."/>
            <person name="Aidinis V."/>
            <person name="Allen J.E."/>
            <person name="Ambesi-Impiombato A."/>
            <person name="Apweiler R."/>
            <person name="Aturaliya R.N."/>
            <person name="Bailey T.L."/>
            <person name="Bansal M."/>
            <person name="Baxter L."/>
            <person name="Beisel K.W."/>
            <person name="Bersano T."/>
            <person name="Bono H."/>
            <person name="Chalk A.M."/>
            <person name="Chiu K.P."/>
            <person name="Choudhary V."/>
            <person name="Christoffels A."/>
            <person name="Clutterbuck D.R."/>
            <person name="Crowe M.L."/>
            <person name="Dalla E."/>
            <person name="Dalrymple B.P."/>
            <person name="de Bono B."/>
            <person name="Della Gatta G."/>
            <person name="di Bernardo D."/>
            <person name="Down T."/>
            <person name="Engstrom P."/>
            <person name="Fagiolini M."/>
            <person name="Faulkner G."/>
            <person name="Fletcher C.F."/>
            <person name="Fukushima T."/>
            <person name="Furuno M."/>
            <person name="Futaki S."/>
            <person name="Gariboldi M."/>
            <person name="Georgii-Hemming P."/>
            <person name="Gingeras T.R."/>
            <person name="Gojobori T."/>
            <person name="Green R.E."/>
            <person name="Gustincich S."/>
            <person name="Harbers M."/>
            <person name="Hayashi Y."/>
            <person name="Hensch T.K."/>
            <person name="Hirokawa N."/>
            <person name="Hill D."/>
            <person name="Huminiecki L."/>
            <person name="Iacono M."/>
            <person name="Ikeo K."/>
            <person name="Iwama A."/>
            <person name="Ishikawa T."/>
            <person name="Jakt M."/>
            <person name="Kanapin A."/>
            <person name="Katoh M."/>
            <person name="Kawasawa Y."/>
            <person name="Kelso J."/>
            <person name="Kitamura H."/>
            <person name="Kitano H."/>
            <person name="Kollias G."/>
            <person name="Krishnan S.P."/>
            <person name="Kruger A."/>
            <person name="Kummerfeld S.K."/>
            <person name="Kurochkin I.V."/>
            <person name="Lareau L.F."/>
            <person name="Lazarevic D."/>
            <person name="Lipovich L."/>
            <person name="Liu J."/>
            <person name="Liuni S."/>
            <person name="McWilliam S."/>
            <person name="Madan Babu M."/>
            <person name="Madera M."/>
            <person name="Marchionni L."/>
            <person name="Matsuda H."/>
            <person name="Matsuzawa S."/>
            <person name="Miki H."/>
            <person name="Mignone F."/>
            <person name="Miyake S."/>
            <person name="Morris K."/>
            <person name="Mottagui-Tabar S."/>
            <person name="Mulder N."/>
            <person name="Nakano N."/>
            <person name="Nakauchi H."/>
            <person name="Ng P."/>
            <person name="Nilsson R."/>
            <person name="Nishiguchi S."/>
            <person name="Nishikawa S."/>
            <person name="Nori F."/>
            <person name="Ohara O."/>
            <person name="Okazaki Y."/>
            <person name="Orlando V."/>
            <person name="Pang K.C."/>
            <person name="Pavan W.J."/>
            <person name="Pavesi G."/>
            <person name="Pesole G."/>
            <person name="Petrovsky N."/>
            <person name="Piazza S."/>
            <person name="Reed J."/>
            <person name="Reid J.F."/>
            <person name="Ring B.Z."/>
            <person name="Ringwald M."/>
            <person name="Rost B."/>
            <person name="Ruan Y."/>
            <person name="Salzberg S.L."/>
            <person name="Sandelin A."/>
            <person name="Schneider C."/>
            <person name="Schoenbach C."/>
            <person name="Sekiguchi K."/>
            <person name="Semple C.A."/>
            <person name="Seno S."/>
            <person name="Sessa L."/>
            <person name="Sheng Y."/>
            <person name="Shibata Y."/>
            <person name="Shimada H."/>
            <person name="Shimada K."/>
            <person name="Silva D."/>
            <person name="Sinclair B."/>
            <person name="Sperling S."/>
            <person name="Stupka E."/>
            <person name="Sugiura K."/>
            <person name="Sultana R."/>
            <person name="Takenaka Y."/>
            <person name="Taki K."/>
            <person name="Tammoja K."/>
            <person name="Tan S.L."/>
            <person name="Tang S."/>
            <person name="Taylor M.S."/>
            <person name="Tegner J."/>
            <person name="Teichmann S.A."/>
            <person name="Ueda H.R."/>
            <person name="van Nimwegen E."/>
            <person name="Verardo R."/>
            <person name="Wei C.L."/>
            <person name="Yagi K."/>
            <person name="Yamanishi H."/>
            <person name="Zabarovsky E."/>
            <person name="Zhu S."/>
            <person name="Zimmer A."/>
            <person name="Hide W."/>
            <person name="Bult C."/>
            <person name="Grimmond S.M."/>
            <person name="Teasdale R.D."/>
            <person name="Liu E.T."/>
            <person name="Brusic V."/>
            <person name="Quackenbush J."/>
            <person name="Wahlestedt C."/>
            <person name="Mattick J.S."/>
            <person name="Hume D.A."/>
            <person name="Kai C."/>
            <person name="Sasaki D."/>
            <person name="Tomaru Y."/>
            <person name="Fukuda S."/>
            <person name="Kanamori-Katayama M."/>
            <person name="Suzuki M."/>
            <person name="Aoki J."/>
            <person name="Arakawa T."/>
            <person name="Iida J."/>
            <person name="Imamura K."/>
            <person name="Itoh M."/>
            <person name="Kato T."/>
            <person name="Kawaji H."/>
            <person name="Kawagashira N."/>
            <person name="Kawashima T."/>
            <person name="Kojima M."/>
            <person name="Kondo S."/>
            <person name="Konno H."/>
            <person name="Nakano K."/>
            <person name="Ninomiya N."/>
            <person name="Nishio T."/>
            <person name="Okada M."/>
            <person name="Plessy C."/>
            <person name="Shibata K."/>
            <person name="Shiraki T."/>
            <person name="Suzuki S."/>
            <person name="Tagami M."/>
            <person name="Waki K."/>
            <person name="Watahiki A."/>
            <person name="Okamura-Oho Y."/>
            <person name="Suzuki H."/>
            <person name="Kawai J."/>
            <person name="Hayashizaki Y."/>
        </authorList>
    </citation>
    <scope>NUCLEOTIDE SEQUENCE [LARGE SCALE MRNA]</scope>
    <source>
        <strain>C57BL/6J</strain>
    </source>
</reference>
<reference key="3">
    <citation type="journal article" date="2004" name="Genome Res.">
        <title>The status, quality, and expansion of the NIH full-length cDNA project: the Mammalian Gene Collection (MGC).</title>
        <authorList>
            <consortium name="The MGC Project Team"/>
        </authorList>
    </citation>
    <scope>NUCLEOTIDE SEQUENCE [LARGE SCALE MRNA]</scope>
    <source>
        <strain>FVB/N</strain>
        <tissue>Colon</tissue>
    </source>
</reference>
<reference key="4">
    <citation type="journal article" date="2010" name="Hum. Mol. Genet.">
        <title>Consortin, a trans-Golgi network cargo receptor for the plasma membrane targeting and recycling of connexins.</title>
        <authorList>
            <person name="del Castillo F.J."/>
            <person name="Cohen-Salmon M."/>
            <person name="Charollais A."/>
            <person name="Caille D."/>
            <person name="Lampe P.D."/>
            <person name="Chavrier P."/>
            <person name="Meda P."/>
            <person name="Petit C."/>
        </authorList>
    </citation>
    <scope>INTERACTION WITH CNST</scope>
</reference>
<sequence length="270" mass="30902">MDWKKLQDLLSGVNQYSTAFGRIWLSVVFVFRVLVYVVAAERVWGDEQKDFDCNTRQPGCTNVCYDNFFPISNIRLWALQLIFVTCPSMLVILHVAYREERERKHRQKHGEQCAKLYSHPGKKHGGLWWTYLFSLIFKLIIELVFLYVLHTLWHGFTMPRLVQCASIVPCPNTVDCYIARPTEKKVFTYFMVGASAVCIILTICEICYLIFHRIMRGISKGKSTKSISSPKSSSRASTCRCHHKLLESGDPEADPASEKLQASAPSLTPI</sequence>